<proteinExistence type="inferred from homology"/>
<comment type="function">
    <text evidence="1">RuBisCO catalyzes two reactions: the carboxylation of D-ribulose 1,5-bisphosphate, the primary event in carbon dioxide fixation, as well as the oxidative fragmentation of the pentose substrate in the photorespiration process. Both reactions occur simultaneously and in competition at the same active site.</text>
</comment>
<comment type="catalytic activity">
    <reaction evidence="1">
        <text>2 (2R)-3-phosphoglycerate + 2 H(+) = D-ribulose 1,5-bisphosphate + CO2 + H2O</text>
        <dbReference type="Rhea" id="RHEA:23124"/>
        <dbReference type="ChEBI" id="CHEBI:15377"/>
        <dbReference type="ChEBI" id="CHEBI:15378"/>
        <dbReference type="ChEBI" id="CHEBI:16526"/>
        <dbReference type="ChEBI" id="CHEBI:57870"/>
        <dbReference type="ChEBI" id="CHEBI:58272"/>
        <dbReference type="EC" id="4.1.1.39"/>
    </reaction>
</comment>
<comment type="catalytic activity">
    <reaction evidence="1">
        <text>D-ribulose 1,5-bisphosphate + O2 = 2-phosphoglycolate + (2R)-3-phosphoglycerate + 2 H(+)</text>
        <dbReference type="Rhea" id="RHEA:36631"/>
        <dbReference type="ChEBI" id="CHEBI:15378"/>
        <dbReference type="ChEBI" id="CHEBI:15379"/>
        <dbReference type="ChEBI" id="CHEBI:57870"/>
        <dbReference type="ChEBI" id="CHEBI:58033"/>
        <dbReference type="ChEBI" id="CHEBI:58272"/>
    </reaction>
</comment>
<comment type="cofactor">
    <cofactor evidence="1">
        <name>Mg(2+)</name>
        <dbReference type="ChEBI" id="CHEBI:18420"/>
    </cofactor>
    <text evidence="1">Binds 1 Mg(2+) ion per subunit.</text>
</comment>
<comment type="subunit">
    <text evidence="1">Heterohexadecamer of 8 large chains and 8 small chains; disulfide-linked. The disulfide link is formed within the large subunit homodimers.</text>
</comment>
<comment type="subcellular location">
    <subcellularLocation>
        <location>Plastid</location>
        <location>Chloroplast</location>
    </subcellularLocation>
</comment>
<comment type="PTM">
    <text evidence="1">The disulfide bond which can form in the large chain dimeric partners within the hexadecamer appears to be associated with oxidative stress and protein turnover.</text>
</comment>
<comment type="miscellaneous">
    <text evidence="1">The basic functional RuBisCO is composed of a large chain homodimer in a 'head-to-tail' conformation. In form I RuBisCO this homodimer is arranged in a barrel-like tetramer with the small subunits forming a tetrameric 'cap' on each end of the 'barrel'.</text>
</comment>
<comment type="similarity">
    <text evidence="1">Belongs to the RuBisCO large chain family. Type I subfamily.</text>
</comment>
<keyword id="KW-0113">Calvin cycle</keyword>
<keyword id="KW-0120">Carbon dioxide fixation</keyword>
<keyword id="KW-0150">Chloroplast</keyword>
<keyword id="KW-1015">Disulfide bond</keyword>
<keyword id="KW-0456">Lyase</keyword>
<keyword id="KW-0460">Magnesium</keyword>
<keyword id="KW-0479">Metal-binding</keyword>
<keyword id="KW-0488">Methylation</keyword>
<keyword id="KW-0503">Monooxygenase</keyword>
<keyword id="KW-0560">Oxidoreductase</keyword>
<keyword id="KW-0601">Photorespiration</keyword>
<keyword id="KW-0602">Photosynthesis</keyword>
<keyword id="KW-0934">Plastid</keyword>
<feature type="chain" id="PRO_0000062416" description="Ribulose bisphosphate carboxylase large chain">
    <location>
        <begin position="1" status="less than"/>
        <end position="468"/>
    </location>
</feature>
<feature type="active site" description="Proton acceptor" evidence="1">
    <location>
        <position position="168"/>
    </location>
</feature>
<feature type="active site" description="Proton acceptor" evidence="1">
    <location>
        <position position="287"/>
    </location>
</feature>
<feature type="binding site" description="in homodimeric partner" evidence="1">
    <location>
        <position position="116"/>
    </location>
    <ligand>
        <name>substrate</name>
    </ligand>
</feature>
<feature type="binding site" evidence="1">
    <location>
        <position position="166"/>
    </location>
    <ligand>
        <name>substrate</name>
    </ligand>
</feature>
<feature type="binding site" evidence="1">
    <location>
        <position position="170"/>
    </location>
    <ligand>
        <name>substrate</name>
    </ligand>
</feature>
<feature type="binding site" description="via carbamate group" evidence="1">
    <location>
        <position position="194"/>
    </location>
    <ligand>
        <name>Mg(2+)</name>
        <dbReference type="ChEBI" id="CHEBI:18420"/>
    </ligand>
</feature>
<feature type="binding site" evidence="1">
    <location>
        <position position="196"/>
    </location>
    <ligand>
        <name>Mg(2+)</name>
        <dbReference type="ChEBI" id="CHEBI:18420"/>
    </ligand>
</feature>
<feature type="binding site" evidence="1">
    <location>
        <position position="197"/>
    </location>
    <ligand>
        <name>Mg(2+)</name>
        <dbReference type="ChEBI" id="CHEBI:18420"/>
    </ligand>
</feature>
<feature type="binding site" evidence="1">
    <location>
        <position position="288"/>
    </location>
    <ligand>
        <name>substrate</name>
    </ligand>
</feature>
<feature type="binding site" evidence="1">
    <location>
        <position position="320"/>
    </location>
    <ligand>
        <name>substrate</name>
    </ligand>
</feature>
<feature type="binding site" evidence="1">
    <location>
        <position position="372"/>
    </location>
    <ligand>
        <name>substrate</name>
    </ligand>
</feature>
<feature type="site" description="Transition state stabilizer" evidence="1">
    <location>
        <position position="327"/>
    </location>
</feature>
<feature type="modified residue" description="N6,N6,N6-trimethyllysine" evidence="1">
    <location>
        <position position="7"/>
    </location>
</feature>
<feature type="modified residue" description="N6-carboxylysine" evidence="1">
    <location>
        <position position="194"/>
    </location>
</feature>
<feature type="disulfide bond" description="Interchain; in linked form" evidence="1">
    <location>
        <position position="240"/>
    </location>
</feature>
<feature type="non-terminal residue">
    <location>
        <position position="1"/>
    </location>
</feature>
<accession>Q31948</accession>
<reference key="1">
    <citation type="submission" date="2001-04" db="EMBL/GenBank/DDBJ databases">
        <authorList>
            <person name="Xiang Q.-Y."/>
            <person name="Soltis D.E."/>
            <person name="Soltis P.S."/>
            <person name="Manchester S.R."/>
            <person name="Crawford D.J."/>
        </authorList>
    </citation>
    <scope>NUCLEOTIDE SEQUENCE [GENOMIC DNA]</scope>
    <source>
        <tissue>Leaf</tissue>
    </source>
</reference>
<reference key="2">
    <citation type="journal article" date="1993" name="Ann. Mo. Bot. Gard.">
        <title>Phylogenetic relationships of Cornus L. sensu lato and putative relatives inferred from rbcL sequence data.</title>
        <authorList>
            <person name="Xiang Q.-Y."/>
            <person name="Soltis D.E."/>
            <person name="Morgan D.R."/>
            <person name="Soltis P.S."/>
        </authorList>
        <dbReference type="AGRICOLA" id="IND93053817"/>
    </citation>
    <scope>NUCLEOTIDE SEQUENCE [GENOMIC DNA] OF 4-468</scope>
    <source>
        <tissue>Leaf</tissue>
    </source>
</reference>
<organism>
    <name type="scientific">Cornus alternifolia</name>
    <name type="common">Pagoda dogwood</name>
    <name type="synonym">Swida alternifolia</name>
    <dbReference type="NCBI Taxonomy" id="16902"/>
    <lineage>
        <taxon>Eukaryota</taxon>
        <taxon>Viridiplantae</taxon>
        <taxon>Streptophyta</taxon>
        <taxon>Embryophyta</taxon>
        <taxon>Tracheophyta</taxon>
        <taxon>Spermatophyta</taxon>
        <taxon>Magnoliopsida</taxon>
        <taxon>eudicotyledons</taxon>
        <taxon>Gunneridae</taxon>
        <taxon>Pentapetalae</taxon>
        <taxon>asterids</taxon>
        <taxon>Cornales</taxon>
        <taxon>Cornaceae</taxon>
        <taxon>Cornus</taxon>
    </lineage>
</organism>
<geneLocation type="chloroplast"/>
<sequence>KASVGFKAGVKEYKLTYYTPTYETKDTDILAAFRVTPQPGVPPEEAGAAVAAESSTGTWTTVWTDGLTSLDRYKGRCYHIEPVAGEENQFIAYVAYPLDLFEEGSVTNMFTSIVGNVFGFKALRALRLEDLRIPTAYVKTFQGPPHGIQVERDKLNKYGRPLLGCTIKPKLGLSAKNYGRAVYECLRGGLDFTKDDENVNSQPFMRWRDRFLFCAEAIFKSQSETGEIKGHYLNATAGTCEEMMKRAIFARELGVPIVMHDYLTGGFTANTSLAHYCRDNGLLLHIHRAMHAVIDRQKNHGIHFRVLAKALRMSGGDHIHAGTVVGKLEGERDITLGFVDLLRDDFIEKDRSRGLFFTQDWVSLPGVLPVASGGIHVWHMPALTEIFGDDSVLQFGGGTLGHPWGNAPGAVANRVALEACVQARNEGRDLASEGNEIIREASKWSPELAAACEVWKEIKFEFEAMDTL</sequence>
<dbReference type="EC" id="4.1.1.39" evidence="1"/>
<dbReference type="EMBL" id="AF190432">
    <property type="protein sequence ID" value="AAK29189.1"/>
    <property type="molecule type" value="Genomic_DNA"/>
</dbReference>
<dbReference type="SMR" id="Q31948"/>
<dbReference type="GO" id="GO:0009507">
    <property type="term" value="C:chloroplast"/>
    <property type="evidence" value="ECO:0007669"/>
    <property type="project" value="UniProtKB-SubCell"/>
</dbReference>
<dbReference type="GO" id="GO:0000287">
    <property type="term" value="F:magnesium ion binding"/>
    <property type="evidence" value="ECO:0007669"/>
    <property type="project" value="InterPro"/>
</dbReference>
<dbReference type="GO" id="GO:0004497">
    <property type="term" value="F:monooxygenase activity"/>
    <property type="evidence" value="ECO:0007669"/>
    <property type="project" value="UniProtKB-KW"/>
</dbReference>
<dbReference type="GO" id="GO:0016984">
    <property type="term" value="F:ribulose-bisphosphate carboxylase activity"/>
    <property type="evidence" value="ECO:0007669"/>
    <property type="project" value="UniProtKB-EC"/>
</dbReference>
<dbReference type="GO" id="GO:0009853">
    <property type="term" value="P:photorespiration"/>
    <property type="evidence" value="ECO:0007669"/>
    <property type="project" value="UniProtKB-KW"/>
</dbReference>
<dbReference type="GO" id="GO:0019253">
    <property type="term" value="P:reductive pentose-phosphate cycle"/>
    <property type="evidence" value="ECO:0007669"/>
    <property type="project" value="UniProtKB-KW"/>
</dbReference>
<dbReference type="CDD" id="cd08212">
    <property type="entry name" value="RuBisCO_large_I"/>
    <property type="match status" value="1"/>
</dbReference>
<dbReference type="FunFam" id="3.20.20.110:FF:000001">
    <property type="entry name" value="Ribulose bisphosphate carboxylase large chain"/>
    <property type="match status" value="1"/>
</dbReference>
<dbReference type="FunFam" id="3.30.70.150:FF:000001">
    <property type="entry name" value="Ribulose bisphosphate carboxylase large chain"/>
    <property type="match status" value="1"/>
</dbReference>
<dbReference type="Gene3D" id="3.20.20.110">
    <property type="entry name" value="Ribulose bisphosphate carboxylase, large subunit, C-terminal domain"/>
    <property type="match status" value="1"/>
</dbReference>
<dbReference type="Gene3D" id="3.30.70.150">
    <property type="entry name" value="RuBisCO large subunit, N-terminal domain"/>
    <property type="match status" value="1"/>
</dbReference>
<dbReference type="HAMAP" id="MF_01338">
    <property type="entry name" value="RuBisCO_L_type1"/>
    <property type="match status" value="1"/>
</dbReference>
<dbReference type="InterPro" id="IPR033966">
    <property type="entry name" value="RuBisCO"/>
</dbReference>
<dbReference type="InterPro" id="IPR020878">
    <property type="entry name" value="RuBisCo_large_chain_AS"/>
</dbReference>
<dbReference type="InterPro" id="IPR000685">
    <property type="entry name" value="RuBisCO_lsu_C"/>
</dbReference>
<dbReference type="InterPro" id="IPR036376">
    <property type="entry name" value="RuBisCO_lsu_C_sf"/>
</dbReference>
<dbReference type="InterPro" id="IPR017443">
    <property type="entry name" value="RuBisCO_lsu_fd_N"/>
</dbReference>
<dbReference type="InterPro" id="IPR036422">
    <property type="entry name" value="RuBisCO_lsu_N_sf"/>
</dbReference>
<dbReference type="InterPro" id="IPR020888">
    <property type="entry name" value="RuBisCO_lsuI"/>
</dbReference>
<dbReference type="NCBIfam" id="NF003252">
    <property type="entry name" value="PRK04208.1"/>
    <property type="match status" value="1"/>
</dbReference>
<dbReference type="PANTHER" id="PTHR42704">
    <property type="entry name" value="RIBULOSE BISPHOSPHATE CARBOXYLASE"/>
    <property type="match status" value="1"/>
</dbReference>
<dbReference type="PANTHER" id="PTHR42704:SF15">
    <property type="entry name" value="RIBULOSE BISPHOSPHATE CARBOXYLASE LARGE CHAIN"/>
    <property type="match status" value="1"/>
</dbReference>
<dbReference type="Pfam" id="PF00016">
    <property type="entry name" value="RuBisCO_large"/>
    <property type="match status" value="1"/>
</dbReference>
<dbReference type="Pfam" id="PF02788">
    <property type="entry name" value="RuBisCO_large_N"/>
    <property type="match status" value="1"/>
</dbReference>
<dbReference type="SFLD" id="SFLDG01052">
    <property type="entry name" value="RuBisCO"/>
    <property type="match status" value="1"/>
</dbReference>
<dbReference type="SFLD" id="SFLDS00014">
    <property type="entry name" value="RuBisCO"/>
    <property type="match status" value="1"/>
</dbReference>
<dbReference type="SFLD" id="SFLDG00301">
    <property type="entry name" value="RuBisCO-like_proteins"/>
    <property type="match status" value="1"/>
</dbReference>
<dbReference type="SUPFAM" id="SSF51649">
    <property type="entry name" value="RuBisCo, C-terminal domain"/>
    <property type="match status" value="1"/>
</dbReference>
<dbReference type="SUPFAM" id="SSF54966">
    <property type="entry name" value="RuBisCO, large subunit, small (N-terminal) domain"/>
    <property type="match status" value="1"/>
</dbReference>
<dbReference type="PROSITE" id="PS00157">
    <property type="entry name" value="RUBISCO_LARGE"/>
    <property type="match status" value="1"/>
</dbReference>
<gene>
    <name evidence="1" type="primary">rbcL</name>
</gene>
<evidence type="ECO:0000255" key="1">
    <source>
        <dbReference type="HAMAP-Rule" id="MF_01338"/>
    </source>
</evidence>
<protein>
    <recommendedName>
        <fullName evidence="1">Ribulose bisphosphate carboxylase large chain</fullName>
        <shortName evidence="1">RuBisCO large subunit</shortName>
        <ecNumber evidence="1">4.1.1.39</ecNumber>
    </recommendedName>
</protein>
<name>RBL_CORAT</name>